<gene>
    <name evidence="1" type="primary">E</name>
    <name type="synonym">sM</name>
    <name type="ORF">4</name>
</gene>
<accession>Q3LZW9</accession>
<organismHost>
    <name type="scientific">Rhinolophus sinicus</name>
    <name type="common">Chinese rufous horseshoe bat</name>
    <dbReference type="NCBI Taxonomy" id="89399"/>
</organismHost>
<proteinExistence type="inferred from homology"/>
<sequence>MYSFVSEETGTLIVNSVLLFLAFVVFLLVTLAILTALRLCAYCCNIVNVSLVKPTVYVYSRVKNLNSSEGVPDLLV</sequence>
<reference key="1">
    <citation type="journal article" date="2005" name="Proc. Natl. Acad. Sci. U.S.A.">
        <title>Severe acute respiratory syndrome coronavirus-like virus in Chinese horseshoe bats.</title>
        <authorList>
            <person name="Lau S.K.P."/>
            <person name="Woo P.C.Y."/>
            <person name="Li K.S.M."/>
            <person name="Huang Y."/>
            <person name="Tsoi H.-W."/>
            <person name="Wong B.H.L."/>
            <person name="Wong S.S.Y."/>
            <person name="Leung S.-Y."/>
            <person name="Chan K.-H."/>
            <person name="Yuen K.-Y."/>
        </authorList>
    </citation>
    <scope>NUCLEOTIDE SEQUENCE [GENOMIC RNA]</scope>
    <source>
        <strain>Isolate HKU3-1</strain>
    </source>
</reference>
<name>VEMP_BCHK3</name>
<keyword id="KW-0053">Apoptosis</keyword>
<keyword id="KW-1040">Host Golgi apparatus</keyword>
<keyword id="KW-1043">Host membrane</keyword>
<keyword id="KW-0472">Membrane</keyword>
<keyword id="KW-0812">Transmembrane</keyword>
<keyword id="KW-1133">Transmembrane helix</keyword>
<dbReference type="EMBL" id="DQ022305">
    <property type="protein sequence ID" value="AAY88868.1"/>
    <property type="molecule type" value="Genomic_RNA"/>
</dbReference>
<dbReference type="SMR" id="Q3LZW9"/>
<dbReference type="Proteomes" id="UP000007450">
    <property type="component" value="Segment"/>
</dbReference>
<dbReference type="GO" id="GO:0044178">
    <property type="term" value="C:host cell Golgi membrane"/>
    <property type="evidence" value="ECO:0007669"/>
    <property type="project" value="UniProtKB-SubCell"/>
</dbReference>
<dbReference type="GO" id="GO:0016020">
    <property type="term" value="C:membrane"/>
    <property type="evidence" value="ECO:0007669"/>
    <property type="project" value="UniProtKB-UniRule"/>
</dbReference>
<dbReference type="GO" id="GO:0140975">
    <property type="term" value="P:disruption of cellular anatomical structure in another organism"/>
    <property type="evidence" value="ECO:0007669"/>
    <property type="project" value="UniProtKB-UniRule"/>
</dbReference>
<dbReference type="GO" id="GO:0046760">
    <property type="term" value="P:viral budding from Golgi membrane"/>
    <property type="evidence" value="ECO:0007669"/>
    <property type="project" value="UniProtKB-UniRule"/>
</dbReference>
<dbReference type="CDD" id="cd21536">
    <property type="entry name" value="SARS-CoV-2_E"/>
    <property type="match status" value="1"/>
</dbReference>
<dbReference type="Gene3D" id="6.10.250.1810">
    <property type="match status" value="1"/>
</dbReference>
<dbReference type="HAMAP" id="MF_04204">
    <property type="entry name" value="BETA_CORONA_E"/>
    <property type="match status" value="1"/>
</dbReference>
<dbReference type="InterPro" id="IPR043506">
    <property type="entry name" value="E_protein_bCoV"/>
</dbReference>
<dbReference type="InterPro" id="IPR003873">
    <property type="entry name" value="E_protein_CoV"/>
</dbReference>
<dbReference type="InterPro" id="IPR044377">
    <property type="entry name" value="E_SARS-CoV-2"/>
</dbReference>
<dbReference type="Pfam" id="PF02723">
    <property type="entry name" value="CoV_E"/>
    <property type="match status" value="1"/>
</dbReference>
<dbReference type="PROSITE" id="PS51926">
    <property type="entry name" value="COV_E"/>
    <property type="match status" value="1"/>
</dbReference>
<evidence type="ECO:0000255" key="1">
    <source>
        <dbReference type="HAMAP-Rule" id="MF_04204"/>
    </source>
</evidence>
<feature type="chain" id="PRO_0000292948" description="Envelope small membrane protein">
    <location>
        <begin position="1"/>
        <end position="76"/>
    </location>
</feature>
<feature type="topological domain" description="Virion surface" evidence="1">
    <location>
        <begin position="1"/>
        <end position="16"/>
    </location>
</feature>
<feature type="transmembrane region" description="Helical" evidence="1">
    <location>
        <begin position="17"/>
        <end position="37"/>
    </location>
</feature>
<feature type="topological domain" description="Intravirion" evidence="1">
    <location>
        <begin position="38"/>
        <end position="76"/>
    </location>
</feature>
<comment type="function">
    <text evidence="1">Plays a central role in virus morphogenesis and assembly. Acts as a viroporin and self-assembles in host membranes forming pentameric protein-lipid pores that allow ion transport. Also plays a role in the induction of apoptosis.</text>
</comment>
<comment type="subunit">
    <text evidence="1">Homopentamer. Interacts with membrane protein M in the budding compartment of the host cell, which is located between endoplasmic reticulum and the Golgi complex. Interacts with Nucleoprotein.</text>
</comment>
<comment type="subcellular location">
    <subcellularLocation>
        <location evidence="1">Host Golgi apparatus membrane</location>
        <topology evidence="1">Single-pass type III membrane protein</topology>
    </subcellularLocation>
    <text evidence="1">The cytoplasmic tail functions as a Golgi complex-targeting signal.</text>
</comment>
<comment type="miscellaneous">
    <text>Bat coronavirus HKU3 is highly similar to SARS-CoV (SARS-like).</text>
</comment>
<comment type="similarity">
    <text evidence="1">Belongs to the betacoronaviruses E protein family.</text>
</comment>
<protein>
    <recommendedName>
        <fullName evidence="1">Envelope small membrane protein</fullName>
        <shortName evidence="1">E protein</shortName>
        <shortName evidence="1">sM protein</shortName>
    </recommendedName>
</protein>
<organism>
    <name type="scientific">Bat coronavirus HKU3</name>
    <name type="common">BtCoV</name>
    <name type="synonym">SARS-like coronavirus HKU3</name>
    <dbReference type="NCBI Taxonomy" id="442736"/>
    <lineage>
        <taxon>Viruses</taxon>
        <taxon>Riboviria</taxon>
        <taxon>Orthornavirae</taxon>
        <taxon>Pisuviricota</taxon>
        <taxon>Pisoniviricetes</taxon>
        <taxon>Nidovirales</taxon>
        <taxon>Cornidovirineae</taxon>
        <taxon>Coronaviridae</taxon>
        <taxon>Orthocoronavirinae</taxon>
        <taxon>Betacoronavirus</taxon>
        <taxon>Sarbecovirus</taxon>
        <taxon>Severe acute respiratory syndrome coronavirus</taxon>
    </lineage>
</organism>